<organism>
    <name type="scientific">Burkholderia mallei (strain NCTC 10247)</name>
    <dbReference type="NCBI Taxonomy" id="320389"/>
    <lineage>
        <taxon>Bacteria</taxon>
        <taxon>Pseudomonadati</taxon>
        <taxon>Pseudomonadota</taxon>
        <taxon>Betaproteobacteria</taxon>
        <taxon>Burkholderiales</taxon>
        <taxon>Burkholderiaceae</taxon>
        <taxon>Burkholderia</taxon>
        <taxon>pseudomallei group</taxon>
    </lineage>
</organism>
<evidence type="ECO:0000255" key="1">
    <source>
        <dbReference type="HAMAP-Rule" id="MF_00090"/>
    </source>
</evidence>
<evidence type="ECO:0000256" key="2">
    <source>
        <dbReference type="SAM" id="MobiDB-lite"/>
    </source>
</evidence>
<evidence type="ECO:0000305" key="3"/>
<feature type="chain" id="PRO_0000351831" description="Protein-L-isoaspartate O-methyltransferase">
    <location>
        <begin position="1"/>
        <end position="322"/>
    </location>
</feature>
<feature type="region of interest" description="Disordered" evidence="2">
    <location>
        <begin position="1"/>
        <end position="101"/>
    </location>
</feature>
<feature type="compositionally biased region" description="Basic and acidic residues" evidence="2">
    <location>
        <begin position="14"/>
        <end position="29"/>
    </location>
</feature>
<feature type="compositionally biased region" description="Low complexity" evidence="2">
    <location>
        <begin position="33"/>
        <end position="51"/>
    </location>
</feature>
<feature type="compositionally biased region" description="Low complexity" evidence="2">
    <location>
        <begin position="76"/>
        <end position="91"/>
    </location>
</feature>
<feature type="active site" evidence="1">
    <location>
        <position position="170"/>
    </location>
</feature>
<dbReference type="EC" id="2.1.1.77" evidence="1"/>
<dbReference type="EMBL" id="CP000548">
    <property type="protein sequence ID" value="ABO03951.1"/>
    <property type="status" value="ALT_INIT"/>
    <property type="molecule type" value="Genomic_DNA"/>
</dbReference>
<dbReference type="RefSeq" id="WP_011203980.1">
    <property type="nucleotide sequence ID" value="NZ_CP007802.1"/>
</dbReference>
<dbReference type="SMR" id="A3MK86"/>
<dbReference type="KEGG" id="bmaz:BM44_1980"/>
<dbReference type="KEGG" id="bmn:BMA10247_1118"/>
<dbReference type="PATRIC" id="fig|320389.8.peg.2223"/>
<dbReference type="GO" id="GO:0005737">
    <property type="term" value="C:cytoplasm"/>
    <property type="evidence" value="ECO:0007669"/>
    <property type="project" value="UniProtKB-SubCell"/>
</dbReference>
<dbReference type="GO" id="GO:0004719">
    <property type="term" value="F:protein-L-isoaspartate (D-aspartate) O-methyltransferase activity"/>
    <property type="evidence" value="ECO:0007669"/>
    <property type="project" value="UniProtKB-UniRule"/>
</dbReference>
<dbReference type="GO" id="GO:0032259">
    <property type="term" value="P:methylation"/>
    <property type="evidence" value="ECO:0007669"/>
    <property type="project" value="UniProtKB-KW"/>
</dbReference>
<dbReference type="GO" id="GO:0036211">
    <property type="term" value="P:protein modification process"/>
    <property type="evidence" value="ECO:0007669"/>
    <property type="project" value="UniProtKB-UniRule"/>
</dbReference>
<dbReference type="GO" id="GO:0030091">
    <property type="term" value="P:protein repair"/>
    <property type="evidence" value="ECO:0007669"/>
    <property type="project" value="UniProtKB-UniRule"/>
</dbReference>
<dbReference type="CDD" id="cd02440">
    <property type="entry name" value="AdoMet_MTases"/>
    <property type="match status" value="1"/>
</dbReference>
<dbReference type="FunFam" id="3.40.50.150:FF:000010">
    <property type="entry name" value="Protein-L-isoaspartate O-methyltransferase"/>
    <property type="match status" value="1"/>
</dbReference>
<dbReference type="Gene3D" id="3.40.50.150">
    <property type="entry name" value="Vaccinia Virus protein VP39"/>
    <property type="match status" value="1"/>
</dbReference>
<dbReference type="HAMAP" id="MF_00090">
    <property type="entry name" value="PIMT"/>
    <property type="match status" value="1"/>
</dbReference>
<dbReference type="InterPro" id="IPR000682">
    <property type="entry name" value="PCMT"/>
</dbReference>
<dbReference type="InterPro" id="IPR029063">
    <property type="entry name" value="SAM-dependent_MTases_sf"/>
</dbReference>
<dbReference type="NCBIfam" id="TIGR00080">
    <property type="entry name" value="pimt"/>
    <property type="match status" value="1"/>
</dbReference>
<dbReference type="NCBIfam" id="NF001453">
    <property type="entry name" value="PRK00312.1"/>
    <property type="match status" value="1"/>
</dbReference>
<dbReference type="PANTHER" id="PTHR11579">
    <property type="entry name" value="PROTEIN-L-ISOASPARTATE O-METHYLTRANSFERASE"/>
    <property type="match status" value="1"/>
</dbReference>
<dbReference type="PANTHER" id="PTHR11579:SF0">
    <property type="entry name" value="PROTEIN-L-ISOASPARTATE(D-ASPARTATE) O-METHYLTRANSFERASE"/>
    <property type="match status" value="1"/>
</dbReference>
<dbReference type="Pfam" id="PF01135">
    <property type="entry name" value="PCMT"/>
    <property type="match status" value="1"/>
</dbReference>
<dbReference type="SUPFAM" id="SSF53335">
    <property type="entry name" value="S-adenosyl-L-methionine-dependent methyltransferases"/>
    <property type="match status" value="1"/>
</dbReference>
<dbReference type="PROSITE" id="PS01279">
    <property type="entry name" value="PCMT"/>
    <property type="match status" value="1"/>
</dbReference>
<comment type="function">
    <text evidence="1">Catalyzes the methyl esterification of L-isoaspartyl residues in peptides and proteins that result from spontaneous decomposition of normal L-aspartyl and L-asparaginyl residues. It plays a role in the repair and/or degradation of damaged proteins.</text>
</comment>
<comment type="catalytic activity">
    <reaction evidence="1">
        <text>[protein]-L-isoaspartate + S-adenosyl-L-methionine = [protein]-L-isoaspartate alpha-methyl ester + S-adenosyl-L-homocysteine</text>
        <dbReference type="Rhea" id="RHEA:12705"/>
        <dbReference type="Rhea" id="RHEA-COMP:12143"/>
        <dbReference type="Rhea" id="RHEA-COMP:12144"/>
        <dbReference type="ChEBI" id="CHEBI:57856"/>
        <dbReference type="ChEBI" id="CHEBI:59789"/>
        <dbReference type="ChEBI" id="CHEBI:90596"/>
        <dbReference type="ChEBI" id="CHEBI:90598"/>
        <dbReference type="EC" id="2.1.1.77"/>
    </reaction>
</comment>
<comment type="subcellular location">
    <subcellularLocation>
        <location evidence="1">Cytoplasm</location>
    </subcellularLocation>
</comment>
<comment type="similarity">
    <text evidence="1">Belongs to the methyltransferase superfamily. L-isoaspartyl/D-aspartyl protein methyltransferase family.</text>
</comment>
<comment type="sequence caution" evidence="3">
    <conflict type="erroneous initiation">
        <sequence resource="EMBL-CDS" id="ABO03951"/>
    </conflict>
</comment>
<gene>
    <name evidence="1" type="primary">pcm</name>
    <name type="ordered locus">BMA10247_1118</name>
</gene>
<accession>A3MK86</accession>
<name>PIMT_BURM7</name>
<reference key="1">
    <citation type="journal article" date="2010" name="Genome Biol. Evol.">
        <title>Continuing evolution of Burkholderia mallei through genome reduction and large-scale rearrangements.</title>
        <authorList>
            <person name="Losada L."/>
            <person name="Ronning C.M."/>
            <person name="DeShazer D."/>
            <person name="Woods D."/>
            <person name="Fedorova N."/>
            <person name="Kim H.S."/>
            <person name="Shabalina S.A."/>
            <person name="Pearson T.R."/>
            <person name="Brinkac L."/>
            <person name="Tan P."/>
            <person name="Nandi T."/>
            <person name="Crabtree J."/>
            <person name="Badger J."/>
            <person name="Beckstrom-Sternberg S."/>
            <person name="Saqib M."/>
            <person name="Schutzer S.E."/>
            <person name="Keim P."/>
            <person name="Nierman W.C."/>
        </authorList>
    </citation>
    <scope>NUCLEOTIDE SEQUENCE [LARGE SCALE GENOMIC DNA]</scope>
    <source>
        <strain>NCTC 10247</strain>
    </source>
</reference>
<protein>
    <recommendedName>
        <fullName evidence="1">Protein-L-isoaspartate O-methyltransferase</fullName>
        <ecNumber evidence="1">2.1.1.77</ecNumber>
    </recommendedName>
    <alternativeName>
        <fullName evidence="1">L-isoaspartyl protein carboxyl methyltransferase</fullName>
    </alternativeName>
    <alternativeName>
        <fullName evidence="1">Protein L-isoaspartyl methyltransferase</fullName>
    </alternativeName>
    <alternativeName>
        <fullName evidence="1">Protein-beta-aspartate methyltransferase</fullName>
        <shortName evidence="1">PIMT</shortName>
    </alternativeName>
</protein>
<sequence>MSGERAKRFPLALEDLKREPRKPEGRVAERQAAGDAARQRLTAAAAVPAAASPIVPERRAPHGGVFAAKPARAKQHAPAAPGAAKRAPQGGAKQGDRSAAPNVALSGALALTSERVRERMVERLRANGVADPRVLAAMSAVPRHMFVDPGLAAQAYEDAALPIGHQQTISKPSVVARMIELAAAGRALERVLEIGTGCGYQAAVLSRVARDVYSIERVRPLYERAKLNLRPLRVPNIRLHYGDGRVGLPAAAPFDAIVIAAAGLDVPRALLEQLAIGGRLVAPVGEQAGEQVLTLVERVAPAQWRESRLDRVFFVPLKSGVI</sequence>
<proteinExistence type="inferred from homology"/>
<keyword id="KW-0963">Cytoplasm</keyword>
<keyword id="KW-0489">Methyltransferase</keyword>
<keyword id="KW-0949">S-adenosyl-L-methionine</keyword>
<keyword id="KW-0808">Transferase</keyword>